<protein>
    <recommendedName>
        <fullName evidence="1">7,8-didemethyl-8-hydroxy-5-deazariboflavin synthase</fullName>
        <ecNumber evidence="1">4.3.1.32</ecNumber>
    </recommendedName>
    <alternativeName>
        <fullName evidence="1">FO synthase subunit 1</fullName>
    </alternativeName>
</protein>
<feature type="chain" id="PRO_0000147759" description="7,8-didemethyl-8-hydroxy-5-deazariboflavin synthase">
    <location>
        <begin position="1"/>
        <end position="313"/>
    </location>
</feature>
<feature type="domain" description="Radical SAM core" evidence="2">
    <location>
        <begin position="4"/>
        <end position="235"/>
    </location>
</feature>
<feature type="binding site" evidence="1">
    <location>
        <position position="18"/>
    </location>
    <ligand>
        <name>[4Fe-4S] cluster</name>
        <dbReference type="ChEBI" id="CHEBI:49883"/>
        <note>4Fe-4S-S-AdoMet</note>
    </ligand>
</feature>
<feature type="binding site" evidence="1">
    <location>
        <position position="22"/>
    </location>
    <ligand>
        <name>[4Fe-4S] cluster</name>
        <dbReference type="ChEBI" id="CHEBI:49883"/>
        <note>4Fe-4S-S-AdoMet</note>
    </ligand>
</feature>
<feature type="binding site" evidence="1">
    <location>
        <position position="25"/>
    </location>
    <ligand>
        <name>[4Fe-4S] cluster</name>
        <dbReference type="ChEBI" id="CHEBI:49883"/>
        <note>4Fe-4S-S-AdoMet</note>
    </ligand>
</feature>
<name>COFG_SYNY3</name>
<organism>
    <name type="scientific">Synechocystis sp. (strain ATCC 27184 / PCC 6803 / Kazusa)</name>
    <dbReference type="NCBI Taxonomy" id="1111708"/>
    <lineage>
        <taxon>Bacteria</taxon>
        <taxon>Bacillati</taxon>
        <taxon>Cyanobacteriota</taxon>
        <taxon>Cyanophyceae</taxon>
        <taxon>Synechococcales</taxon>
        <taxon>Merismopediaceae</taxon>
        <taxon>Synechocystis</taxon>
    </lineage>
</organism>
<keyword id="KW-0004">4Fe-4S</keyword>
<keyword id="KW-0408">Iron</keyword>
<keyword id="KW-0411">Iron-sulfur</keyword>
<keyword id="KW-0456">Lyase</keyword>
<keyword id="KW-0479">Metal-binding</keyword>
<keyword id="KW-1185">Reference proteome</keyword>
<keyword id="KW-0949">S-adenosyl-L-methionine</keyword>
<evidence type="ECO:0000255" key="1">
    <source>
        <dbReference type="HAMAP-Rule" id="MF_01611"/>
    </source>
</evidence>
<evidence type="ECO:0000255" key="2">
    <source>
        <dbReference type="PROSITE-ProRule" id="PRU01266"/>
    </source>
</evidence>
<reference key="1">
    <citation type="journal article" date="1996" name="DNA Res.">
        <title>Sequence analysis of the genome of the unicellular cyanobacterium Synechocystis sp. strain PCC6803. II. Sequence determination of the entire genome and assignment of potential protein-coding regions.</title>
        <authorList>
            <person name="Kaneko T."/>
            <person name="Sato S."/>
            <person name="Kotani H."/>
            <person name="Tanaka A."/>
            <person name="Asamizu E."/>
            <person name="Nakamura Y."/>
            <person name="Miyajima N."/>
            <person name="Hirosawa M."/>
            <person name="Sugiura M."/>
            <person name="Sasamoto S."/>
            <person name="Kimura T."/>
            <person name="Hosouchi T."/>
            <person name="Matsuno A."/>
            <person name="Muraki A."/>
            <person name="Nakazaki N."/>
            <person name="Naruo K."/>
            <person name="Okumura S."/>
            <person name="Shimpo S."/>
            <person name="Takeuchi C."/>
            <person name="Wada T."/>
            <person name="Watanabe A."/>
            <person name="Yamada M."/>
            <person name="Yasuda M."/>
            <person name="Tabata S."/>
        </authorList>
    </citation>
    <scope>NUCLEOTIDE SEQUENCE [LARGE SCALE GENOMIC DNA]</scope>
    <source>
        <strain>ATCC 27184 / PCC 6803 / Kazusa</strain>
    </source>
</reference>
<proteinExistence type="inferred from homology"/>
<comment type="function">
    <text evidence="1">Catalyzes the radical-mediated synthesis of 7,8-didemethyl-8-hydroxy-5-deazariboflavin from 5-amino-5-(4-hydroxybenzyl)-6-(D-ribitylimino)-5,6-dihydrouracil.</text>
</comment>
<comment type="catalytic activity">
    <reaction evidence="1">
        <text>5-amino-5-(4-hydroxybenzyl)-6-(D-ribitylimino)-5,6-dihydrouracil + S-adenosyl-L-methionine = 7,8-didemethyl-8-hydroxy-5-deazariboflavin + 5'-deoxyadenosine + L-methionine + NH4(+) + H(+)</text>
        <dbReference type="Rhea" id="RHEA:55204"/>
        <dbReference type="ChEBI" id="CHEBI:15378"/>
        <dbReference type="ChEBI" id="CHEBI:17319"/>
        <dbReference type="ChEBI" id="CHEBI:28938"/>
        <dbReference type="ChEBI" id="CHEBI:57844"/>
        <dbReference type="ChEBI" id="CHEBI:59789"/>
        <dbReference type="ChEBI" id="CHEBI:59904"/>
        <dbReference type="ChEBI" id="CHEBI:85936"/>
        <dbReference type="EC" id="4.3.1.32"/>
    </reaction>
</comment>
<comment type="cofactor">
    <cofactor evidence="1">
        <name>[4Fe-4S] cluster</name>
        <dbReference type="ChEBI" id="CHEBI:49883"/>
    </cofactor>
    <text evidence="1">Binds 1 [4Fe-4S] cluster. The cluster is coordinated with 3 cysteines and an exchangeable S-adenosyl-L-methionine.</text>
</comment>
<comment type="pathway">
    <text evidence="1">Cofactor biosynthesis; coenzyme F0 biosynthesis.</text>
</comment>
<comment type="subunit">
    <text evidence="1">Consists of two subunits, CofG and CofH.</text>
</comment>
<comment type="similarity">
    <text evidence="1">Belongs to the radical SAM superfamily. CofG family.</text>
</comment>
<gene>
    <name evidence="1" type="primary">cofG</name>
    <name type="ordered locus">sll1285</name>
</gene>
<dbReference type="EC" id="4.3.1.32" evidence="1"/>
<dbReference type="EMBL" id="BA000022">
    <property type="protein sequence ID" value="BAA17217.1"/>
    <property type="molecule type" value="Genomic_DNA"/>
</dbReference>
<dbReference type="PIR" id="S75303">
    <property type="entry name" value="S75303"/>
</dbReference>
<dbReference type="SMR" id="P73191"/>
<dbReference type="STRING" id="1148.gene:10498080"/>
<dbReference type="PaxDb" id="1148-1652294"/>
<dbReference type="EnsemblBacteria" id="BAA17217">
    <property type="protein sequence ID" value="BAA17217"/>
    <property type="gene ID" value="BAA17217"/>
</dbReference>
<dbReference type="KEGG" id="syn:sll1285"/>
<dbReference type="eggNOG" id="COG1060">
    <property type="taxonomic scope" value="Bacteria"/>
</dbReference>
<dbReference type="InParanoid" id="P73191"/>
<dbReference type="PhylomeDB" id="P73191"/>
<dbReference type="UniPathway" id="UPA00072"/>
<dbReference type="Proteomes" id="UP000001425">
    <property type="component" value="Chromosome"/>
</dbReference>
<dbReference type="GO" id="GO:0051539">
    <property type="term" value="F:4 iron, 4 sulfur cluster binding"/>
    <property type="evidence" value="ECO:0007669"/>
    <property type="project" value="UniProtKB-KW"/>
</dbReference>
<dbReference type="GO" id="GO:0044689">
    <property type="term" value="F:7,8-didemethyl-8-hydroxy-5-deazariboflavin synthase activity"/>
    <property type="evidence" value="ECO:0000318"/>
    <property type="project" value="GO_Central"/>
</dbReference>
<dbReference type="GO" id="GO:0005506">
    <property type="term" value="F:iron ion binding"/>
    <property type="evidence" value="ECO:0007669"/>
    <property type="project" value="UniProtKB-UniRule"/>
</dbReference>
<dbReference type="GO" id="GO:0016765">
    <property type="term" value="F:transferase activity, transferring alkyl or aryl (other than methyl) groups"/>
    <property type="evidence" value="ECO:0007669"/>
    <property type="project" value="InterPro"/>
</dbReference>
<dbReference type="CDD" id="cd01335">
    <property type="entry name" value="Radical_SAM"/>
    <property type="match status" value="1"/>
</dbReference>
<dbReference type="Gene3D" id="3.20.20.70">
    <property type="entry name" value="Aldolase class I"/>
    <property type="match status" value="1"/>
</dbReference>
<dbReference type="HAMAP" id="MF_01611">
    <property type="entry name" value="FO_synth_sub1"/>
    <property type="match status" value="1"/>
</dbReference>
<dbReference type="InterPro" id="IPR013785">
    <property type="entry name" value="Aldolase_TIM"/>
</dbReference>
<dbReference type="InterPro" id="IPR019939">
    <property type="entry name" value="CofG_family"/>
</dbReference>
<dbReference type="InterPro" id="IPR006638">
    <property type="entry name" value="Elp3/MiaA/NifB-like_rSAM"/>
</dbReference>
<dbReference type="InterPro" id="IPR034405">
    <property type="entry name" value="F420"/>
</dbReference>
<dbReference type="InterPro" id="IPR007197">
    <property type="entry name" value="rSAM"/>
</dbReference>
<dbReference type="NCBIfam" id="TIGR03550">
    <property type="entry name" value="F420_cofG"/>
    <property type="match status" value="1"/>
</dbReference>
<dbReference type="NCBIfam" id="NF004884">
    <property type="entry name" value="PRK06245.1"/>
    <property type="match status" value="1"/>
</dbReference>
<dbReference type="PANTHER" id="PTHR43076:SF15">
    <property type="entry name" value="7,8-DIDEMETHYL-8-HYDROXY-5-DEAZARIBOFLAVIN SYNTHASE"/>
    <property type="match status" value="1"/>
</dbReference>
<dbReference type="PANTHER" id="PTHR43076">
    <property type="entry name" value="FO SYNTHASE (COFH)"/>
    <property type="match status" value="1"/>
</dbReference>
<dbReference type="Pfam" id="PF04055">
    <property type="entry name" value="Radical_SAM"/>
    <property type="match status" value="1"/>
</dbReference>
<dbReference type="SFLD" id="SFLDF00294">
    <property type="entry name" value="7_8-didemethyl-8-hydroxy-5-dea"/>
    <property type="match status" value="1"/>
</dbReference>
<dbReference type="SFLD" id="SFLDG01064">
    <property type="entry name" value="F420__menaquinone_cofactor_bio"/>
    <property type="match status" value="1"/>
</dbReference>
<dbReference type="SMART" id="SM00729">
    <property type="entry name" value="Elp3"/>
    <property type="match status" value="1"/>
</dbReference>
<dbReference type="SUPFAM" id="SSF102114">
    <property type="entry name" value="Radical SAM enzymes"/>
    <property type="match status" value="1"/>
</dbReference>
<dbReference type="PROSITE" id="PS51918">
    <property type="entry name" value="RADICAL_SAM"/>
    <property type="match status" value="1"/>
</dbReference>
<sequence length="313" mass="35288">MLSITYSPAYTLVPTYECFNRCSYCNFRQEPRKDQWLTESVAKQRLESLAGRGIREILILAGEVHPQSSRRKAWFELIYNLGKIALDLGFYPHTNAGPLSRSEIARLKEVNFSLGLMLEQVSPRLLTTVHRQAPSKEPQLRLEQLRLAGELGIPFTTGLLLGIGETDQEVEESLMAIANVQQEYGHIQEVILQPHSPGQKQTDNISAYSPQKLVQVITLARAILPAEITLQIPPNLVPNFSDLLACLAAGVRDLGGIVPIDEVNPDYHHQSVNQLSQLLEENGYLLQPRFPVYPTYFSWLNCDLQQRLSVFIN</sequence>
<accession>P73191</accession>